<comment type="function">
    <text evidence="1">Catalyzes the hydrolysis of complex carboxylic polyesters found in the cell wall of plants (By similarity). Degrades cutin, a macromolecule that forms the structure of the plant cuticle (By similarity).</text>
</comment>
<comment type="catalytic activity">
    <reaction evidence="5">
        <text>cutin + H2O = cutin monomers.</text>
        <dbReference type="EC" id="3.1.1.74"/>
    </reaction>
</comment>
<comment type="subcellular location">
    <subcellularLocation>
        <location evidence="2">Secreted</location>
    </subcellularLocation>
</comment>
<comment type="similarity">
    <text evidence="7">Belongs to the cutinase family.</text>
</comment>
<accession>A2R2W3</accession>
<name>CUTI1_ASPNC</name>
<evidence type="ECO:0000250" key="1">
    <source>
        <dbReference type="UniProtKB" id="P00590"/>
    </source>
</evidence>
<evidence type="ECO:0000250" key="2">
    <source>
        <dbReference type="UniProtKB" id="P11373"/>
    </source>
</evidence>
<evidence type="ECO:0000250" key="3">
    <source>
        <dbReference type="UniProtKB" id="P52956"/>
    </source>
</evidence>
<evidence type="ECO:0000255" key="4"/>
<evidence type="ECO:0000255" key="5">
    <source>
        <dbReference type="PROSITE-ProRule" id="PRU10108"/>
    </source>
</evidence>
<evidence type="ECO:0000256" key="6">
    <source>
        <dbReference type="SAM" id="MobiDB-lite"/>
    </source>
</evidence>
<evidence type="ECO:0000305" key="7"/>
<gene>
    <name type="ORF">An14g02170</name>
</gene>
<feature type="signal peptide" evidence="4">
    <location>
        <begin position="1"/>
        <end position="19"/>
    </location>
</feature>
<feature type="chain" id="PRO_5000220917" description="Probable cutinase 1">
    <location>
        <begin position="20"/>
        <end position="262"/>
    </location>
</feature>
<feature type="region of interest" description="Disordered" evidence="6">
    <location>
        <begin position="228"/>
        <end position="262"/>
    </location>
</feature>
<feature type="active site" description="Nucleophile" evidence="5">
    <location>
        <position position="138"/>
    </location>
</feature>
<feature type="active site" evidence="5">
    <location>
        <position position="193"/>
    </location>
</feature>
<feature type="active site" description="Proton donor/acceptor" evidence="5">
    <location>
        <position position="206"/>
    </location>
</feature>
<feature type="site" description="Transition state stabilizer" evidence="1">
    <location>
        <position position="59"/>
    </location>
</feature>
<feature type="site" description="Transition state stabilizer" evidence="1">
    <location>
        <position position="139"/>
    </location>
</feature>
<feature type="disulfide bond" evidence="3">
    <location>
        <begin position="48"/>
        <end position="127"/>
    </location>
</feature>
<feature type="disulfide bond" evidence="3">
    <location>
        <begin position="74"/>
        <end position="88"/>
    </location>
</feature>
<feature type="disulfide bond" evidence="3">
    <location>
        <begin position="189"/>
        <end position="196"/>
    </location>
</feature>
<proteinExistence type="inferred from homology"/>
<dbReference type="EC" id="3.1.1.74" evidence="5"/>
<dbReference type="EMBL" id="AM270317">
    <property type="protein sequence ID" value="CAK41954.1"/>
    <property type="molecule type" value="Genomic_DNA"/>
</dbReference>
<dbReference type="RefSeq" id="XP_001400843.1">
    <property type="nucleotide sequence ID" value="XM_001400806.1"/>
</dbReference>
<dbReference type="SMR" id="A2R2W3"/>
<dbReference type="ESTHER" id="aspnc-cuti1">
    <property type="family name" value="Cutinase"/>
</dbReference>
<dbReference type="EnsemblFungi" id="CAK41954">
    <property type="protein sequence ID" value="CAK41954"/>
    <property type="gene ID" value="An14g02170"/>
</dbReference>
<dbReference type="GeneID" id="4987073"/>
<dbReference type="KEGG" id="ang:An14g02170"/>
<dbReference type="VEuPathDB" id="FungiDB:An14g02170"/>
<dbReference type="HOGENOM" id="CLU_040058_2_0_1"/>
<dbReference type="Proteomes" id="UP000006706">
    <property type="component" value="Chromosome 1R"/>
</dbReference>
<dbReference type="GO" id="GO:0005576">
    <property type="term" value="C:extracellular region"/>
    <property type="evidence" value="ECO:0007669"/>
    <property type="project" value="UniProtKB-SubCell"/>
</dbReference>
<dbReference type="GO" id="GO:0050525">
    <property type="term" value="F:cutinase activity"/>
    <property type="evidence" value="ECO:0000250"/>
    <property type="project" value="UniProtKB"/>
</dbReference>
<dbReference type="GO" id="GO:0016052">
    <property type="term" value="P:carbohydrate catabolic process"/>
    <property type="evidence" value="ECO:0007669"/>
    <property type="project" value="TreeGrafter"/>
</dbReference>
<dbReference type="FunFam" id="3.40.50.1820:FF:000235">
    <property type="entry name" value="Cutinase 1"/>
    <property type="match status" value="1"/>
</dbReference>
<dbReference type="Gene3D" id="3.40.50.1820">
    <property type="entry name" value="alpha/beta hydrolase"/>
    <property type="match status" value="1"/>
</dbReference>
<dbReference type="InterPro" id="IPR029058">
    <property type="entry name" value="AB_hydrolase_fold"/>
</dbReference>
<dbReference type="InterPro" id="IPR000675">
    <property type="entry name" value="Cutinase/axe"/>
</dbReference>
<dbReference type="InterPro" id="IPR043580">
    <property type="entry name" value="CUTINASE_1"/>
</dbReference>
<dbReference type="InterPro" id="IPR011150">
    <property type="entry name" value="Cutinase_monf"/>
</dbReference>
<dbReference type="PANTHER" id="PTHR48250:SF3">
    <property type="entry name" value="CUTINASE 1-RELATED"/>
    <property type="match status" value="1"/>
</dbReference>
<dbReference type="PANTHER" id="PTHR48250">
    <property type="entry name" value="CUTINASE 2-RELATED"/>
    <property type="match status" value="1"/>
</dbReference>
<dbReference type="Pfam" id="PF01083">
    <property type="entry name" value="Cutinase"/>
    <property type="match status" value="1"/>
</dbReference>
<dbReference type="PRINTS" id="PR00129">
    <property type="entry name" value="CUTINASE"/>
</dbReference>
<dbReference type="SMART" id="SM01110">
    <property type="entry name" value="Cutinase"/>
    <property type="match status" value="1"/>
</dbReference>
<dbReference type="SUPFAM" id="SSF53474">
    <property type="entry name" value="alpha/beta-Hydrolases"/>
    <property type="match status" value="1"/>
</dbReference>
<dbReference type="PROSITE" id="PS00155">
    <property type="entry name" value="CUTINASE_1"/>
    <property type="match status" value="1"/>
</dbReference>
<organism>
    <name type="scientific">Aspergillus niger (strain ATCC MYA-4892 / CBS 513.88 / FGSC A1513)</name>
    <dbReference type="NCBI Taxonomy" id="425011"/>
    <lineage>
        <taxon>Eukaryota</taxon>
        <taxon>Fungi</taxon>
        <taxon>Dikarya</taxon>
        <taxon>Ascomycota</taxon>
        <taxon>Pezizomycotina</taxon>
        <taxon>Eurotiomycetes</taxon>
        <taxon>Eurotiomycetidae</taxon>
        <taxon>Eurotiales</taxon>
        <taxon>Aspergillaceae</taxon>
        <taxon>Aspergillus</taxon>
        <taxon>Aspergillus subgen. Circumdati</taxon>
    </lineage>
</organism>
<keyword id="KW-1015">Disulfide bond</keyword>
<keyword id="KW-0378">Hydrolase</keyword>
<keyword id="KW-1185">Reference proteome</keyword>
<keyword id="KW-0964">Secreted</keyword>
<keyword id="KW-0719">Serine esterase</keyword>
<keyword id="KW-0732">Signal</keyword>
<protein>
    <recommendedName>
        <fullName>Probable cutinase 1</fullName>
        <ecNumber evidence="5">3.1.1.74</ecNumber>
    </recommendedName>
    <alternativeName>
        <fullName>Cutin hydrolase 1</fullName>
    </alternativeName>
</protein>
<reference key="1">
    <citation type="journal article" date="2007" name="Nat. Biotechnol.">
        <title>Genome sequencing and analysis of the versatile cell factory Aspergillus niger CBS 513.88.</title>
        <authorList>
            <person name="Pel H.J."/>
            <person name="de Winde J.H."/>
            <person name="Archer D.B."/>
            <person name="Dyer P.S."/>
            <person name="Hofmann G."/>
            <person name="Schaap P.J."/>
            <person name="Turner G."/>
            <person name="de Vries R.P."/>
            <person name="Albang R."/>
            <person name="Albermann K."/>
            <person name="Andersen M.R."/>
            <person name="Bendtsen J.D."/>
            <person name="Benen J.A.E."/>
            <person name="van den Berg M."/>
            <person name="Breestraat S."/>
            <person name="Caddick M.X."/>
            <person name="Contreras R."/>
            <person name="Cornell M."/>
            <person name="Coutinho P.M."/>
            <person name="Danchin E.G.J."/>
            <person name="Debets A.J.M."/>
            <person name="Dekker P."/>
            <person name="van Dijck P.W.M."/>
            <person name="van Dijk A."/>
            <person name="Dijkhuizen L."/>
            <person name="Driessen A.J.M."/>
            <person name="d'Enfert C."/>
            <person name="Geysens S."/>
            <person name="Goosen C."/>
            <person name="Groot G.S.P."/>
            <person name="de Groot P.W.J."/>
            <person name="Guillemette T."/>
            <person name="Henrissat B."/>
            <person name="Herweijer M."/>
            <person name="van den Hombergh J.P.T.W."/>
            <person name="van den Hondel C.A.M.J.J."/>
            <person name="van der Heijden R.T.J.M."/>
            <person name="van der Kaaij R.M."/>
            <person name="Klis F.M."/>
            <person name="Kools H.J."/>
            <person name="Kubicek C.P."/>
            <person name="van Kuyk P.A."/>
            <person name="Lauber J."/>
            <person name="Lu X."/>
            <person name="van der Maarel M.J.E.C."/>
            <person name="Meulenberg R."/>
            <person name="Menke H."/>
            <person name="Mortimer M.A."/>
            <person name="Nielsen J."/>
            <person name="Oliver S.G."/>
            <person name="Olsthoorn M."/>
            <person name="Pal K."/>
            <person name="van Peij N.N.M.E."/>
            <person name="Ram A.F.J."/>
            <person name="Rinas U."/>
            <person name="Roubos J.A."/>
            <person name="Sagt C.M.J."/>
            <person name="Schmoll M."/>
            <person name="Sun J."/>
            <person name="Ussery D."/>
            <person name="Varga J."/>
            <person name="Vervecken W."/>
            <person name="van de Vondervoort P.J.J."/>
            <person name="Wedler H."/>
            <person name="Woesten H.A.B."/>
            <person name="Zeng A.-P."/>
            <person name="van Ooyen A.J.J."/>
            <person name="Visser J."/>
            <person name="Stam H."/>
        </authorList>
    </citation>
    <scope>NUCLEOTIDE SEQUENCE [LARGE SCALE GENOMIC DNA]</scope>
    <source>
        <strain>ATCC MYA-4892 / CBS 513.88 / FGSC A1513</strain>
    </source>
</reference>
<sequence>MAPLKSLLLGASLATLALSTPLATDAENLYARQFGTGSTANELEQGSCKDVTLIFARGSTELGNMGTVIGPPLCDNLKSKLGSDKVACQGVGGQYSAGLVQNALPQNTDPGSISAAKQMFEEANSKCPNTKIVAGGYSQGSAVIDNAVQELSTTVKDQVKGVVLFGFTRNVQDHGQIPNYPKDDVKVYCAVGDLVCDDTLVVTAMHLTYGMDAGDAASFLAEKVQSSSSSTTSSSSDAASSSSAAGTSSSGLSGLSSFFGGL</sequence>